<comment type="function">
    <text evidence="1">Produces ATP from ADP in the presence of a proton gradient across the membrane.</text>
</comment>
<comment type="subunit">
    <text evidence="1">F-type ATPases have 2 components, CF(1) - the catalytic core - and CF(0) - the membrane proton channel. CF(1) has five subunits: alpha(3), beta(3), gamma(1), delta(1), epsilon(1). CF(0) has three main subunits: a, b and c.</text>
</comment>
<comment type="subcellular location">
    <subcellularLocation>
        <location evidence="1">Plastid</location>
        <location evidence="1">Chloroplast thylakoid membrane</location>
        <topology evidence="1">Peripheral membrane protein</topology>
    </subcellularLocation>
</comment>
<comment type="similarity">
    <text evidence="1">Belongs to the ATPase epsilon chain family.</text>
</comment>
<name>ATPE_HUPLU</name>
<feature type="chain" id="PRO_0000188269" description="ATP synthase epsilon chain, chloroplastic">
    <location>
        <begin position="1"/>
        <end position="138"/>
    </location>
</feature>
<gene>
    <name evidence="1" type="primary">atpE</name>
</gene>
<evidence type="ECO:0000255" key="1">
    <source>
        <dbReference type="HAMAP-Rule" id="MF_00530"/>
    </source>
</evidence>
<reference key="1">
    <citation type="journal article" date="2005" name="Gene">
        <title>The first complete chloroplast genome sequence of a lycophyte, Huperzia lucidula (Lycopodiaceae).</title>
        <authorList>
            <person name="Wolf P.G."/>
            <person name="Karol K.G."/>
            <person name="Mandoli D.F."/>
            <person name="Kuehl J.V."/>
            <person name="Arumuganathan K."/>
            <person name="Ellis M.W."/>
            <person name="Mishler B.D."/>
            <person name="Kelch D.G."/>
            <person name="Olmstead R.G."/>
            <person name="Boore J.L."/>
        </authorList>
    </citation>
    <scope>NUCLEOTIDE SEQUENCE [LARGE SCALE GENOMIC DNA]</scope>
</reference>
<dbReference type="EMBL" id="AY660566">
    <property type="protein sequence ID" value="AAT80719.1"/>
    <property type="molecule type" value="Genomic_DNA"/>
</dbReference>
<dbReference type="RefSeq" id="YP_209523.1">
    <property type="nucleotide sequence ID" value="NC_006861.1"/>
</dbReference>
<dbReference type="SMR" id="Q5SD05"/>
<dbReference type="GeneID" id="3283764"/>
<dbReference type="GO" id="GO:0009535">
    <property type="term" value="C:chloroplast thylakoid membrane"/>
    <property type="evidence" value="ECO:0007669"/>
    <property type="project" value="UniProtKB-SubCell"/>
</dbReference>
<dbReference type="GO" id="GO:0045259">
    <property type="term" value="C:proton-transporting ATP synthase complex"/>
    <property type="evidence" value="ECO:0007669"/>
    <property type="project" value="UniProtKB-KW"/>
</dbReference>
<dbReference type="GO" id="GO:0005524">
    <property type="term" value="F:ATP binding"/>
    <property type="evidence" value="ECO:0007669"/>
    <property type="project" value="UniProtKB-UniRule"/>
</dbReference>
<dbReference type="GO" id="GO:0046933">
    <property type="term" value="F:proton-transporting ATP synthase activity, rotational mechanism"/>
    <property type="evidence" value="ECO:0007669"/>
    <property type="project" value="UniProtKB-UniRule"/>
</dbReference>
<dbReference type="CDD" id="cd12152">
    <property type="entry name" value="F1-ATPase_delta"/>
    <property type="match status" value="1"/>
</dbReference>
<dbReference type="FunFam" id="2.60.15.10:FF:000002">
    <property type="entry name" value="ATP synthase epsilon chain, chloroplastic"/>
    <property type="match status" value="1"/>
</dbReference>
<dbReference type="Gene3D" id="6.10.140.480">
    <property type="match status" value="1"/>
</dbReference>
<dbReference type="Gene3D" id="2.60.15.10">
    <property type="entry name" value="F0F1 ATP synthase delta/epsilon subunit, N-terminal"/>
    <property type="match status" value="1"/>
</dbReference>
<dbReference type="HAMAP" id="MF_00530">
    <property type="entry name" value="ATP_synth_epsil_bac"/>
    <property type="match status" value="1"/>
</dbReference>
<dbReference type="InterPro" id="IPR001469">
    <property type="entry name" value="ATP_synth_F1_dsu/esu"/>
</dbReference>
<dbReference type="InterPro" id="IPR020546">
    <property type="entry name" value="ATP_synth_F1_dsu/esu_N"/>
</dbReference>
<dbReference type="InterPro" id="IPR020547">
    <property type="entry name" value="ATP_synth_F1_esu_C"/>
</dbReference>
<dbReference type="InterPro" id="IPR036771">
    <property type="entry name" value="ATPsynth_dsu/esu_N"/>
</dbReference>
<dbReference type="NCBIfam" id="TIGR01216">
    <property type="entry name" value="ATP_synt_epsi"/>
    <property type="match status" value="1"/>
</dbReference>
<dbReference type="PANTHER" id="PTHR13822">
    <property type="entry name" value="ATP SYNTHASE DELTA/EPSILON CHAIN"/>
    <property type="match status" value="1"/>
</dbReference>
<dbReference type="PANTHER" id="PTHR13822:SF10">
    <property type="entry name" value="ATP SYNTHASE EPSILON CHAIN, CHLOROPLASTIC"/>
    <property type="match status" value="1"/>
</dbReference>
<dbReference type="Pfam" id="PF00401">
    <property type="entry name" value="ATP-synt_DE"/>
    <property type="match status" value="1"/>
</dbReference>
<dbReference type="Pfam" id="PF02823">
    <property type="entry name" value="ATP-synt_DE_N"/>
    <property type="match status" value="1"/>
</dbReference>
<dbReference type="SUPFAM" id="SSF51344">
    <property type="entry name" value="Epsilon subunit of F1F0-ATP synthase N-terminal domain"/>
    <property type="match status" value="1"/>
</dbReference>
<geneLocation type="chloroplast"/>
<sequence>MTLNLRVMTPNRTVWNSEVQEMILSTNSGQIGVLPNHAPLLTALDIGITKIRLNGQWSTMALMGGFAMVDNNQVTILVNEAEEAAGIDPQEAKETFRIAQTNLARAEGKKQVIEANLAFKRAKARLEAIDATLSYASN</sequence>
<accession>Q5SD05</accession>
<proteinExistence type="inferred from homology"/>
<organism>
    <name type="scientific">Huperzia lucidula</name>
    <name type="common">Shining clubmoss</name>
    <name type="synonym">Lycopodium lucidulum</name>
    <dbReference type="NCBI Taxonomy" id="37429"/>
    <lineage>
        <taxon>Eukaryota</taxon>
        <taxon>Viridiplantae</taxon>
        <taxon>Streptophyta</taxon>
        <taxon>Embryophyta</taxon>
        <taxon>Tracheophyta</taxon>
        <taxon>Lycopodiopsida</taxon>
        <taxon>Lycopodiales</taxon>
        <taxon>Lycopodiaceae</taxon>
        <taxon>Huperzioideae</taxon>
        <taxon>Huperzia</taxon>
    </lineage>
</organism>
<keyword id="KW-0066">ATP synthesis</keyword>
<keyword id="KW-0139">CF(1)</keyword>
<keyword id="KW-0150">Chloroplast</keyword>
<keyword id="KW-0375">Hydrogen ion transport</keyword>
<keyword id="KW-0406">Ion transport</keyword>
<keyword id="KW-0472">Membrane</keyword>
<keyword id="KW-0934">Plastid</keyword>
<keyword id="KW-0793">Thylakoid</keyword>
<keyword id="KW-0813">Transport</keyword>
<protein>
    <recommendedName>
        <fullName evidence="1">ATP synthase epsilon chain, chloroplastic</fullName>
    </recommendedName>
    <alternativeName>
        <fullName evidence="1">ATP synthase F1 sector epsilon subunit</fullName>
    </alternativeName>
    <alternativeName>
        <fullName evidence="1">F-ATPase epsilon subunit</fullName>
    </alternativeName>
</protein>